<evidence type="ECO:0000250" key="1"/>
<evidence type="ECO:0000305" key="2"/>
<organism>
    <name type="scientific">Halobacterium salinarum (strain ATCC 700922 / JCM 11081 / NRC-1)</name>
    <name type="common">Halobacterium halobium</name>
    <dbReference type="NCBI Taxonomy" id="64091"/>
    <lineage>
        <taxon>Archaea</taxon>
        <taxon>Methanobacteriati</taxon>
        <taxon>Methanobacteriota</taxon>
        <taxon>Stenosarchaea group</taxon>
        <taxon>Halobacteria</taxon>
        <taxon>Halobacteriales</taxon>
        <taxon>Halobacteriaceae</taxon>
        <taxon>Halobacterium</taxon>
        <taxon>Halobacterium salinarum NRC-34001</taxon>
    </lineage>
</organism>
<sequence>MVTNTSGKKKTAVARATVSDGEGRVRINSQPVELVEPEMARLKMLEPFRISGSDLRGDVDIDIDVAGGGFAGQADAVRTAIARGLVEHYGDAELRDAFREFDRSLLVNDVRQRESKKWGGPGARARYQKSYR</sequence>
<protein>
    <recommendedName>
        <fullName evidence="2">Small ribosomal subunit protein uS9</fullName>
    </recommendedName>
    <alternativeName>
        <fullName>30S ribosomal protein S9</fullName>
    </alternativeName>
</protein>
<accession>Q9HQJ2</accession>
<keyword id="KW-1185">Reference proteome</keyword>
<keyword id="KW-0687">Ribonucleoprotein</keyword>
<keyword id="KW-0689">Ribosomal protein</keyword>
<proteinExistence type="inferred from homology"/>
<feature type="initiator methionine" description="Removed" evidence="1">
    <location>
        <position position="1"/>
    </location>
</feature>
<feature type="chain" id="PRO_0000111463" description="Small ribosomal subunit protein uS9">
    <location>
        <begin position="2"/>
        <end position="132"/>
    </location>
</feature>
<reference key="1">
    <citation type="journal article" date="2000" name="Proc. Natl. Acad. Sci. U.S.A.">
        <title>Genome sequence of Halobacterium species NRC-1.</title>
        <authorList>
            <person name="Ng W.V."/>
            <person name="Kennedy S.P."/>
            <person name="Mahairas G.G."/>
            <person name="Berquist B."/>
            <person name="Pan M."/>
            <person name="Shukla H.D."/>
            <person name="Lasky S.R."/>
            <person name="Baliga N.S."/>
            <person name="Thorsson V."/>
            <person name="Sbrogna J."/>
            <person name="Swartzell S."/>
            <person name="Weir D."/>
            <person name="Hall J."/>
            <person name="Dahl T.A."/>
            <person name="Welti R."/>
            <person name="Goo Y.A."/>
            <person name="Leithauser B."/>
            <person name="Keller K."/>
            <person name="Cruz R."/>
            <person name="Danson M.J."/>
            <person name="Hough D.W."/>
            <person name="Maddocks D.G."/>
            <person name="Jablonski P.E."/>
            <person name="Krebs M.P."/>
            <person name="Angevine C.M."/>
            <person name="Dale H."/>
            <person name="Isenbarger T.A."/>
            <person name="Peck R.F."/>
            <person name="Pohlschroder M."/>
            <person name="Spudich J.L."/>
            <person name="Jung K.-H."/>
            <person name="Alam M."/>
            <person name="Freitas T."/>
            <person name="Hou S."/>
            <person name="Daniels C.J."/>
            <person name="Dennis P.P."/>
            <person name="Omer A.D."/>
            <person name="Ebhardt H."/>
            <person name="Lowe T.M."/>
            <person name="Liang P."/>
            <person name="Riley M."/>
            <person name="Hood L."/>
            <person name="DasSarma S."/>
        </authorList>
    </citation>
    <scope>NUCLEOTIDE SEQUENCE [LARGE SCALE GENOMIC DNA]</scope>
    <source>
        <strain>ATCC 700922 / JCM 11081 / NRC-1</strain>
    </source>
</reference>
<gene>
    <name type="primary">rps9</name>
    <name type="ordered locus">VNG_1139G</name>
</gene>
<dbReference type="EMBL" id="AE004437">
    <property type="protein sequence ID" value="AAG19523.1"/>
    <property type="status" value="ALT_INIT"/>
    <property type="molecule type" value="Genomic_DNA"/>
</dbReference>
<dbReference type="PIR" id="G84269">
    <property type="entry name" value="G84269"/>
</dbReference>
<dbReference type="RefSeq" id="WP_010902818.1">
    <property type="nucleotide sequence ID" value="NC_002607.1"/>
</dbReference>
<dbReference type="SMR" id="Q9HQJ2"/>
<dbReference type="FunCoup" id="Q9HQJ2">
    <property type="interactions" value="95"/>
</dbReference>
<dbReference type="STRING" id="64091.VNG_1139G"/>
<dbReference type="PaxDb" id="64091-VNG_1139G"/>
<dbReference type="KEGG" id="hal:VNG_1139G"/>
<dbReference type="PATRIC" id="fig|64091.14.peg.869"/>
<dbReference type="HOGENOM" id="CLU_046483_4_3_2"/>
<dbReference type="InParanoid" id="Q9HQJ2"/>
<dbReference type="OrthoDB" id="52677at2157"/>
<dbReference type="PhylomeDB" id="Q9HQJ2"/>
<dbReference type="Proteomes" id="UP000000554">
    <property type="component" value="Chromosome"/>
</dbReference>
<dbReference type="GO" id="GO:0022627">
    <property type="term" value="C:cytosolic small ribosomal subunit"/>
    <property type="evidence" value="ECO:0000318"/>
    <property type="project" value="GO_Central"/>
</dbReference>
<dbReference type="GO" id="GO:0003723">
    <property type="term" value="F:RNA binding"/>
    <property type="evidence" value="ECO:0000318"/>
    <property type="project" value="GO_Central"/>
</dbReference>
<dbReference type="GO" id="GO:0003735">
    <property type="term" value="F:structural constituent of ribosome"/>
    <property type="evidence" value="ECO:0000318"/>
    <property type="project" value="GO_Central"/>
</dbReference>
<dbReference type="GO" id="GO:0000462">
    <property type="term" value="P:maturation of SSU-rRNA from tricistronic rRNA transcript (SSU-rRNA, 5.8S rRNA, LSU-rRNA)"/>
    <property type="evidence" value="ECO:0000318"/>
    <property type="project" value="GO_Central"/>
</dbReference>
<dbReference type="GO" id="GO:0006412">
    <property type="term" value="P:translation"/>
    <property type="evidence" value="ECO:0007669"/>
    <property type="project" value="UniProtKB-UniRule"/>
</dbReference>
<dbReference type="FunFam" id="3.30.230.10:FF:000051">
    <property type="entry name" value="30S ribosomal protein S9"/>
    <property type="match status" value="1"/>
</dbReference>
<dbReference type="Gene3D" id="3.30.230.10">
    <property type="match status" value="1"/>
</dbReference>
<dbReference type="HAMAP" id="MF_00532_A">
    <property type="entry name" value="Ribosomal_uS9_A"/>
    <property type="match status" value="1"/>
</dbReference>
<dbReference type="InterPro" id="IPR020568">
    <property type="entry name" value="Ribosomal_Su5_D2-typ_SF"/>
</dbReference>
<dbReference type="InterPro" id="IPR000754">
    <property type="entry name" value="Ribosomal_uS9"/>
</dbReference>
<dbReference type="InterPro" id="IPR019958">
    <property type="entry name" value="Ribosomal_uS9_archaeal"/>
</dbReference>
<dbReference type="InterPro" id="IPR020574">
    <property type="entry name" value="Ribosomal_uS9_CS"/>
</dbReference>
<dbReference type="InterPro" id="IPR014721">
    <property type="entry name" value="Ribsml_uS5_D2-typ_fold_subgr"/>
</dbReference>
<dbReference type="NCBIfam" id="NF001749">
    <property type="entry name" value="PRK00474.1"/>
    <property type="match status" value="1"/>
</dbReference>
<dbReference type="NCBIfam" id="TIGR03627">
    <property type="entry name" value="uS9_arch"/>
    <property type="match status" value="1"/>
</dbReference>
<dbReference type="PANTHER" id="PTHR21569:SF16">
    <property type="entry name" value="RIBOSOMAL PROTEIN S16"/>
    <property type="match status" value="1"/>
</dbReference>
<dbReference type="PANTHER" id="PTHR21569">
    <property type="entry name" value="RIBOSOMAL PROTEIN S9"/>
    <property type="match status" value="1"/>
</dbReference>
<dbReference type="Pfam" id="PF00380">
    <property type="entry name" value="Ribosomal_S9"/>
    <property type="match status" value="1"/>
</dbReference>
<dbReference type="SUPFAM" id="SSF54211">
    <property type="entry name" value="Ribosomal protein S5 domain 2-like"/>
    <property type="match status" value="1"/>
</dbReference>
<dbReference type="PROSITE" id="PS00360">
    <property type="entry name" value="RIBOSOMAL_S9"/>
    <property type="match status" value="1"/>
</dbReference>
<name>RS9_HALSA</name>
<comment type="similarity">
    <text evidence="2">Belongs to the universal ribosomal protein uS9 family.</text>
</comment>
<comment type="sequence caution" evidence="2">
    <conflict type="erroneous initiation">
        <sequence resource="EMBL-CDS" id="AAG19523"/>
    </conflict>
    <text>Truncated N-terminus.</text>
</comment>